<reference key="1">
    <citation type="journal article" date="2010" name="J. Bacteriol.">
        <title>Whole genome sequences of two Xylella fastidiosa strains (M12 and M23) causing almond leaf scorch disease in California.</title>
        <authorList>
            <person name="Chen J."/>
            <person name="Xie G."/>
            <person name="Han S."/>
            <person name="Chertkov O."/>
            <person name="Sims D."/>
            <person name="Civerolo E.L."/>
        </authorList>
    </citation>
    <scope>NUCLEOTIDE SEQUENCE [LARGE SCALE GENOMIC DNA]</scope>
    <source>
        <strain>M12</strain>
    </source>
</reference>
<protein>
    <recommendedName>
        <fullName evidence="1">Ribosome-binding factor A</fullName>
    </recommendedName>
</protein>
<name>RBFA_XYLFM</name>
<sequence>MPKKSFQRTERISVQIRRDLGAFVQAAVRDHGLPSMSVSDVEVTRDMAHAKVFVTVLQAERSFEAVAGLKALARELRMQLAQTMRLRFVPELHFHYDDSLDRGERINTLLRDLIPPADAEKDESG</sequence>
<keyword id="KW-0963">Cytoplasm</keyword>
<keyword id="KW-0690">Ribosome biogenesis</keyword>
<gene>
    <name evidence="1" type="primary">rbfA</name>
    <name type="ordered locus">Xfasm12_0204</name>
</gene>
<organism>
    <name type="scientific">Xylella fastidiosa (strain M12)</name>
    <dbReference type="NCBI Taxonomy" id="405440"/>
    <lineage>
        <taxon>Bacteria</taxon>
        <taxon>Pseudomonadati</taxon>
        <taxon>Pseudomonadota</taxon>
        <taxon>Gammaproteobacteria</taxon>
        <taxon>Lysobacterales</taxon>
        <taxon>Lysobacteraceae</taxon>
        <taxon>Xylella</taxon>
    </lineage>
</organism>
<proteinExistence type="inferred from homology"/>
<feature type="chain" id="PRO_1000088946" description="Ribosome-binding factor A">
    <location>
        <begin position="1"/>
        <end position="125"/>
    </location>
</feature>
<evidence type="ECO:0000255" key="1">
    <source>
        <dbReference type="HAMAP-Rule" id="MF_00003"/>
    </source>
</evidence>
<comment type="function">
    <text evidence="1">One of several proteins that assist in the late maturation steps of the functional core of the 30S ribosomal subunit. Associates with free 30S ribosomal subunits (but not with 30S subunits that are part of 70S ribosomes or polysomes). Required for efficient processing of 16S rRNA. May interact with the 5'-terminal helix region of 16S rRNA.</text>
</comment>
<comment type="subunit">
    <text evidence="1">Monomer. Binds 30S ribosomal subunits, but not 50S ribosomal subunits or 70S ribosomes.</text>
</comment>
<comment type="subcellular location">
    <subcellularLocation>
        <location evidence="1">Cytoplasm</location>
    </subcellularLocation>
</comment>
<comment type="similarity">
    <text evidence="1">Belongs to the RbfA family.</text>
</comment>
<accession>B0U1Q9</accession>
<dbReference type="EMBL" id="CP000941">
    <property type="protein sequence ID" value="ACA11237.1"/>
    <property type="molecule type" value="Genomic_DNA"/>
</dbReference>
<dbReference type="RefSeq" id="WP_004086263.1">
    <property type="nucleotide sequence ID" value="NC_010513.1"/>
</dbReference>
<dbReference type="SMR" id="B0U1Q9"/>
<dbReference type="KEGG" id="xfm:Xfasm12_0204"/>
<dbReference type="HOGENOM" id="CLU_089475_5_0_6"/>
<dbReference type="GO" id="GO:0005829">
    <property type="term" value="C:cytosol"/>
    <property type="evidence" value="ECO:0007669"/>
    <property type="project" value="TreeGrafter"/>
</dbReference>
<dbReference type="GO" id="GO:0043024">
    <property type="term" value="F:ribosomal small subunit binding"/>
    <property type="evidence" value="ECO:0007669"/>
    <property type="project" value="TreeGrafter"/>
</dbReference>
<dbReference type="GO" id="GO:0030490">
    <property type="term" value="P:maturation of SSU-rRNA"/>
    <property type="evidence" value="ECO:0007669"/>
    <property type="project" value="UniProtKB-UniRule"/>
</dbReference>
<dbReference type="Gene3D" id="3.30.300.20">
    <property type="match status" value="1"/>
</dbReference>
<dbReference type="HAMAP" id="MF_00003">
    <property type="entry name" value="RbfA"/>
    <property type="match status" value="1"/>
</dbReference>
<dbReference type="InterPro" id="IPR015946">
    <property type="entry name" value="KH_dom-like_a/b"/>
</dbReference>
<dbReference type="InterPro" id="IPR000238">
    <property type="entry name" value="RbfA"/>
</dbReference>
<dbReference type="InterPro" id="IPR023799">
    <property type="entry name" value="RbfA_dom_sf"/>
</dbReference>
<dbReference type="InterPro" id="IPR020053">
    <property type="entry name" value="Ribosome-bd_factorA_CS"/>
</dbReference>
<dbReference type="NCBIfam" id="TIGR00082">
    <property type="entry name" value="rbfA"/>
    <property type="match status" value="1"/>
</dbReference>
<dbReference type="PANTHER" id="PTHR33515">
    <property type="entry name" value="RIBOSOME-BINDING FACTOR A, CHLOROPLASTIC-RELATED"/>
    <property type="match status" value="1"/>
</dbReference>
<dbReference type="PANTHER" id="PTHR33515:SF1">
    <property type="entry name" value="RIBOSOME-BINDING FACTOR A, CHLOROPLASTIC-RELATED"/>
    <property type="match status" value="1"/>
</dbReference>
<dbReference type="Pfam" id="PF02033">
    <property type="entry name" value="RBFA"/>
    <property type="match status" value="1"/>
</dbReference>
<dbReference type="SUPFAM" id="SSF89919">
    <property type="entry name" value="Ribosome-binding factor A, RbfA"/>
    <property type="match status" value="1"/>
</dbReference>
<dbReference type="PROSITE" id="PS01319">
    <property type="entry name" value="RBFA"/>
    <property type="match status" value="1"/>
</dbReference>